<evidence type="ECO:0000255" key="1">
    <source>
        <dbReference type="HAMAP-Rule" id="MF_00607"/>
    </source>
</evidence>
<protein>
    <recommendedName>
        <fullName evidence="1">Ribosomal RNA small subunit methyltransferase A</fullName>
        <ecNumber evidence="1">2.1.1.182</ecNumber>
    </recommendedName>
    <alternativeName>
        <fullName evidence="1">16S rRNA (adenine(1518)-N(6)/adenine(1519)-N(6))-dimethyltransferase</fullName>
    </alternativeName>
    <alternativeName>
        <fullName evidence="1">16S rRNA dimethyladenosine transferase</fullName>
    </alternativeName>
    <alternativeName>
        <fullName evidence="1">16S rRNA dimethylase</fullName>
    </alternativeName>
    <alternativeName>
        <fullName evidence="1">S-adenosylmethionine-6-N', N'-adenosyl(rRNA) dimethyltransferase</fullName>
    </alternativeName>
</protein>
<dbReference type="EC" id="2.1.1.182" evidence="1"/>
<dbReference type="EMBL" id="CP000262">
    <property type="protein sequence ID" value="ABF37167.1"/>
    <property type="molecule type" value="Genomic_DNA"/>
</dbReference>
<dbReference type="SMR" id="Q1J8J4"/>
<dbReference type="KEGG" id="spi:MGAS10750_Spy0217"/>
<dbReference type="HOGENOM" id="CLU_041220_0_0_9"/>
<dbReference type="Proteomes" id="UP000002434">
    <property type="component" value="Chromosome"/>
</dbReference>
<dbReference type="GO" id="GO:0005829">
    <property type="term" value="C:cytosol"/>
    <property type="evidence" value="ECO:0007669"/>
    <property type="project" value="TreeGrafter"/>
</dbReference>
<dbReference type="GO" id="GO:0052908">
    <property type="term" value="F:16S rRNA (adenine(1518)-N(6)/adenine(1519)-N(6))-dimethyltransferase activity"/>
    <property type="evidence" value="ECO:0007669"/>
    <property type="project" value="UniProtKB-EC"/>
</dbReference>
<dbReference type="GO" id="GO:0003723">
    <property type="term" value="F:RNA binding"/>
    <property type="evidence" value="ECO:0007669"/>
    <property type="project" value="UniProtKB-KW"/>
</dbReference>
<dbReference type="CDD" id="cd02440">
    <property type="entry name" value="AdoMet_MTases"/>
    <property type="match status" value="1"/>
</dbReference>
<dbReference type="FunFam" id="3.40.50.150:FF:000023">
    <property type="entry name" value="Ribosomal RNA small subunit methyltransferase A"/>
    <property type="match status" value="1"/>
</dbReference>
<dbReference type="Gene3D" id="1.10.8.100">
    <property type="entry name" value="Ribosomal RNA adenine dimethylase-like, domain 2"/>
    <property type="match status" value="1"/>
</dbReference>
<dbReference type="Gene3D" id="3.40.50.150">
    <property type="entry name" value="Vaccinia Virus protein VP39"/>
    <property type="match status" value="1"/>
</dbReference>
<dbReference type="HAMAP" id="MF_00607">
    <property type="entry name" value="16SrRNA_methyltr_A"/>
    <property type="match status" value="1"/>
</dbReference>
<dbReference type="InterPro" id="IPR001737">
    <property type="entry name" value="KsgA/Erm"/>
</dbReference>
<dbReference type="InterPro" id="IPR023165">
    <property type="entry name" value="rRNA_Ade_diMease-like_C"/>
</dbReference>
<dbReference type="InterPro" id="IPR020596">
    <property type="entry name" value="rRNA_Ade_Mease_Trfase_CS"/>
</dbReference>
<dbReference type="InterPro" id="IPR020598">
    <property type="entry name" value="rRNA_Ade_methylase_Trfase_N"/>
</dbReference>
<dbReference type="InterPro" id="IPR011530">
    <property type="entry name" value="rRNA_adenine_dimethylase"/>
</dbReference>
<dbReference type="InterPro" id="IPR029063">
    <property type="entry name" value="SAM-dependent_MTases_sf"/>
</dbReference>
<dbReference type="NCBIfam" id="TIGR00755">
    <property type="entry name" value="ksgA"/>
    <property type="match status" value="1"/>
</dbReference>
<dbReference type="PANTHER" id="PTHR11727">
    <property type="entry name" value="DIMETHYLADENOSINE TRANSFERASE"/>
    <property type="match status" value="1"/>
</dbReference>
<dbReference type="PANTHER" id="PTHR11727:SF7">
    <property type="entry name" value="DIMETHYLADENOSINE TRANSFERASE-RELATED"/>
    <property type="match status" value="1"/>
</dbReference>
<dbReference type="Pfam" id="PF00398">
    <property type="entry name" value="RrnaAD"/>
    <property type="match status" value="1"/>
</dbReference>
<dbReference type="SMART" id="SM00650">
    <property type="entry name" value="rADc"/>
    <property type="match status" value="1"/>
</dbReference>
<dbReference type="SUPFAM" id="SSF53335">
    <property type="entry name" value="S-adenosyl-L-methionine-dependent methyltransferases"/>
    <property type="match status" value="1"/>
</dbReference>
<dbReference type="PROSITE" id="PS01131">
    <property type="entry name" value="RRNA_A_DIMETH"/>
    <property type="match status" value="1"/>
</dbReference>
<dbReference type="PROSITE" id="PS51689">
    <property type="entry name" value="SAM_RNA_A_N6_MT"/>
    <property type="match status" value="1"/>
</dbReference>
<proteinExistence type="inferred from homology"/>
<name>RSMA_STRPF</name>
<organism>
    <name type="scientific">Streptococcus pyogenes serotype M4 (strain MGAS10750)</name>
    <dbReference type="NCBI Taxonomy" id="370554"/>
    <lineage>
        <taxon>Bacteria</taxon>
        <taxon>Bacillati</taxon>
        <taxon>Bacillota</taxon>
        <taxon>Bacilli</taxon>
        <taxon>Lactobacillales</taxon>
        <taxon>Streptococcaceae</taxon>
        <taxon>Streptococcus</taxon>
    </lineage>
</organism>
<comment type="function">
    <text evidence="1">Specifically dimethylates two adjacent adenosines (A1518 and A1519) in the loop of a conserved hairpin near the 3'-end of 16S rRNA in the 30S particle. May play a critical role in biogenesis of 30S subunits.</text>
</comment>
<comment type="catalytic activity">
    <reaction evidence="1">
        <text>adenosine(1518)/adenosine(1519) in 16S rRNA + 4 S-adenosyl-L-methionine = N(6)-dimethyladenosine(1518)/N(6)-dimethyladenosine(1519) in 16S rRNA + 4 S-adenosyl-L-homocysteine + 4 H(+)</text>
        <dbReference type="Rhea" id="RHEA:19609"/>
        <dbReference type="Rhea" id="RHEA-COMP:10232"/>
        <dbReference type="Rhea" id="RHEA-COMP:10233"/>
        <dbReference type="ChEBI" id="CHEBI:15378"/>
        <dbReference type="ChEBI" id="CHEBI:57856"/>
        <dbReference type="ChEBI" id="CHEBI:59789"/>
        <dbReference type="ChEBI" id="CHEBI:74411"/>
        <dbReference type="ChEBI" id="CHEBI:74493"/>
        <dbReference type="EC" id="2.1.1.182"/>
    </reaction>
</comment>
<comment type="subcellular location">
    <subcellularLocation>
        <location evidence="1">Cytoplasm</location>
    </subcellularLocation>
</comment>
<comment type="similarity">
    <text evidence="1">Belongs to the class I-like SAM-binding methyltransferase superfamily. rRNA adenine N(6)-methyltransferase family. RsmA subfamily.</text>
</comment>
<gene>
    <name evidence="1" type="primary">rsmA</name>
    <name evidence="1" type="synonym">ksgA</name>
    <name type="ordered locus">MGAS10750_Spy0217</name>
</gene>
<reference key="1">
    <citation type="journal article" date="2006" name="Proc. Natl. Acad. Sci. U.S.A.">
        <title>Molecular genetic anatomy of inter- and intraserotype variation in the human bacterial pathogen group A Streptococcus.</title>
        <authorList>
            <person name="Beres S.B."/>
            <person name="Richter E.W."/>
            <person name="Nagiec M.J."/>
            <person name="Sumby P."/>
            <person name="Porcella S.F."/>
            <person name="DeLeo F.R."/>
            <person name="Musser J.M."/>
        </authorList>
    </citation>
    <scope>NUCLEOTIDE SEQUENCE [LARGE SCALE GENOMIC DNA]</scope>
    <source>
        <strain>MGAS10750</strain>
    </source>
</reference>
<keyword id="KW-0963">Cytoplasm</keyword>
<keyword id="KW-0489">Methyltransferase</keyword>
<keyword id="KW-0694">RNA-binding</keyword>
<keyword id="KW-0698">rRNA processing</keyword>
<keyword id="KW-0949">S-adenosyl-L-methionine</keyword>
<keyword id="KW-0808">Transferase</keyword>
<feature type="chain" id="PRO_0000257360" description="Ribosomal RNA small subunit methyltransferase A">
    <location>
        <begin position="1"/>
        <end position="298"/>
    </location>
</feature>
<feature type="binding site" evidence="1">
    <location>
        <position position="35"/>
    </location>
    <ligand>
        <name>S-adenosyl-L-methionine</name>
        <dbReference type="ChEBI" id="CHEBI:59789"/>
    </ligand>
</feature>
<feature type="binding site" evidence="1">
    <location>
        <position position="37"/>
    </location>
    <ligand>
        <name>S-adenosyl-L-methionine</name>
        <dbReference type="ChEBI" id="CHEBI:59789"/>
    </ligand>
</feature>
<feature type="binding site" evidence="1">
    <location>
        <position position="62"/>
    </location>
    <ligand>
        <name>S-adenosyl-L-methionine</name>
        <dbReference type="ChEBI" id="CHEBI:59789"/>
    </ligand>
</feature>
<feature type="binding site" evidence="1">
    <location>
        <position position="83"/>
    </location>
    <ligand>
        <name>S-adenosyl-L-methionine</name>
        <dbReference type="ChEBI" id="CHEBI:59789"/>
    </ligand>
</feature>
<feature type="binding site" evidence="1">
    <location>
        <position position="108"/>
    </location>
    <ligand>
        <name>S-adenosyl-L-methionine</name>
        <dbReference type="ChEBI" id="CHEBI:59789"/>
    </ligand>
</feature>
<feature type="binding site" evidence="1">
    <location>
        <position position="133"/>
    </location>
    <ligand>
        <name>S-adenosyl-L-methionine</name>
        <dbReference type="ChEBI" id="CHEBI:59789"/>
    </ligand>
</feature>
<sequence>MIIKRREYMRIADYSVTKAVLDRHGFTFKKSFGQNFLTDTNILQKIVDTAEIDQNVNVIEIGPGIGALTEFLAENAAEVMAFEIDDRLVPILADTLRDFDNVQVVNQDILKADLQTQIKQFKNPDLPIKVVANLPYYITTPILMHLIESKIPFQEFVVMMQREVADRISAEPNTKAYGSLSIAVQYYMTAKVAFIVPRTVFVPAPNVDSAILKMVRRDQPLIEVEDEDFFFRVSRLSFVHRRKTLWNNLTSHFGKSEDIKAKLEKGLALADIKPSIRGEALSIQDFGKLADALKEVGL</sequence>
<accession>Q1J8J4</accession>